<keyword id="KW-0997">Cell inner membrane</keyword>
<keyword id="KW-1003">Cell membrane</keyword>
<keyword id="KW-0472">Membrane</keyword>
<keyword id="KW-1185">Reference proteome</keyword>
<keyword id="KW-0812">Transmembrane</keyword>
<keyword id="KW-1133">Transmembrane helix</keyword>
<organism>
    <name type="scientific">Shigella flexneri</name>
    <dbReference type="NCBI Taxonomy" id="623"/>
    <lineage>
        <taxon>Bacteria</taxon>
        <taxon>Pseudomonadati</taxon>
        <taxon>Pseudomonadota</taxon>
        <taxon>Gammaproteobacteria</taxon>
        <taxon>Enterobacterales</taxon>
        <taxon>Enterobacteriaceae</taxon>
        <taxon>Shigella</taxon>
    </lineage>
</organism>
<proteinExistence type="inferred from homology"/>
<reference key="1">
    <citation type="journal article" date="2002" name="Nucleic Acids Res.">
        <title>Genome sequence of Shigella flexneri 2a: insights into pathogenicity through comparison with genomes of Escherichia coli K12 and O157.</title>
        <authorList>
            <person name="Jin Q."/>
            <person name="Yuan Z."/>
            <person name="Xu J."/>
            <person name="Wang Y."/>
            <person name="Shen Y."/>
            <person name="Lu W."/>
            <person name="Wang J."/>
            <person name="Liu H."/>
            <person name="Yang J."/>
            <person name="Yang F."/>
            <person name="Zhang X."/>
            <person name="Zhang J."/>
            <person name="Yang G."/>
            <person name="Wu H."/>
            <person name="Qu D."/>
            <person name="Dong J."/>
            <person name="Sun L."/>
            <person name="Xue Y."/>
            <person name="Zhao A."/>
            <person name="Gao Y."/>
            <person name="Zhu J."/>
            <person name="Kan B."/>
            <person name="Ding K."/>
            <person name="Chen S."/>
            <person name="Cheng H."/>
            <person name="Yao Z."/>
            <person name="He B."/>
            <person name="Chen R."/>
            <person name="Ma D."/>
            <person name="Qiang B."/>
            <person name="Wen Y."/>
            <person name="Hou Y."/>
            <person name="Yu J."/>
        </authorList>
    </citation>
    <scope>NUCLEOTIDE SEQUENCE [LARGE SCALE GENOMIC DNA]</scope>
    <source>
        <strain>301 / Serotype 2a</strain>
    </source>
</reference>
<reference key="2">
    <citation type="journal article" date="2003" name="Infect. Immun.">
        <title>Complete genome sequence and comparative genomics of Shigella flexneri serotype 2a strain 2457T.</title>
        <authorList>
            <person name="Wei J."/>
            <person name="Goldberg M.B."/>
            <person name="Burland V."/>
            <person name="Venkatesan M.M."/>
            <person name="Deng W."/>
            <person name="Fournier G."/>
            <person name="Mayhew G.F."/>
            <person name="Plunkett G. III"/>
            <person name="Rose D.J."/>
            <person name="Darling A."/>
            <person name="Mau B."/>
            <person name="Perna N.T."/>
            <person name="Payne S.M."/>
            <person name="Runyen-Janecky L.J."/>
            <person name="Zhou S."/>
            <person name="Schwartz D.C."/>
            <person name="Blattner F.R."/>
        </authorList>
    </citation>
    <scope>NUCLEOTIDE SEQUENCE [LARGE SCALE GENOMIC DNA]</scope>
    <source>
        <strain>ATCC 700930 / 2457T / Serotype 2a</strain>
    </source>
</reference>
<evidence type="ECO:0000250" key="1"/>
<evidence type="ECO:0000255" key="2"/>
<accession>P0ADL9</accession>
<accession>P31444</accession>
<gene>
    <name type="primary">yidG</name>
    <name type="ordered locus">SF3787</name>
    <name type="ordered locus">S3982</name>
</gene>
<sequence>MPDSRKARRIADPGLQPERTSLAWFRTMLGYGALMALAIKHNWHQAGMLFWISIGILAIVALILWHYTRNRNLMDVTNSDFSQFHVVRDKFLISLAVLSLAILFAVTHIHQLIVFIERVA</sequence>
<feature type="chain" id="PRO_0000169627" description="Inner membrane protein YidG">
    <location>
        <begin position="1"/>
        <end position="120"/>
    </location>
</feature>
<feature type="topological domain" description="Cytoplasmic" evidence="2">
    <location>
        <begin position="1"/>
        <end position="21"/>
    </location>
</feature>
<feature type="transmembrane region" description="Helical" evidence="2">
    <location>
        <begin position="22"/>
        <end position="39"/>
    </location>
</feature>
<feature type="topological domain" description="Periplasmic" evidence="2">
    <location>
        <begin position="40"/>
        <end position="48"/>
    </location>
</feature>
<feature type="transmembrane region" description="Helical" evidence="2">
    <location>
        <begin position="49"/>
        <end position="68"/>
    </location>
</feature>
<feature type="topological domain" description="Cytoplasmic" evidence="2">
    <location>
        <begin position="69"/>
        <end position="90"/>
    </location>
</feature>
<feature type="transmembrane region" description="Helical" evidence="2">
    <location>
        <begin position="91"/>
        <end position="113"/>
    </location>
</feature>
<feature type="topological domain" description="Periplasmic" evidence="2">
    <location>
        <begin position="114"/>
        <end position="120"/>
    </location>
</feature>
<dbReference type="EMBL" id="AE005674">
    <property type="protein sequence ID" value="AAN45227.1"/>
    <property type="molecule type" value="Genomic_DNA"/>
</dbReference>
<dbReference type="EMBL" id="AE014073">
    <property type="protein sequence ID" value="AAP18970.1"/>
    <property type="molecule type" value="Genomic_DNA"/>
</dbReference>
<dbReference type="RefSeq" id="NP_709520.1">
    <property type="nucleotide sequence ID" value="NC_004337.2"/>
</dbReference>
<dbReference type="RefSeq" id="WP_001113432.1">
    <property type="nucleotide sequence ID" value="NZ_WPGW01000019.1"/>
</dbReference>
<dbReference type="STRING" id="198214.SF3787"/>
<dbReference type="PaxDb" id="198214-SF3787"/>
<dbReference type="GeneID" id="1023527"/>
<dbReference type="KEGG" id="sfl:SF3787"/>
<dbReference type="KEGG" id="sfx:S3982"/>
<dbReference type="PATRIC" id="fig|198214.7.peg.4472"/>
<dbReference type="HOGENOM" id="CLU_150487_2_0_6"/>
<dbReference type="Proteomes" id="UP000001006">
    <property type="component" value="Chromosome"/>
</dbReference>
<dbReference type="Proteomes" id="UP000002673">
    <property type="component" value="Chromosome"/>
</dbReference>
<dbReference type="GO" id="GO:0005886">
    <property type="term" value="C:plasma membrane"/>
    <property type="evidence" value="ECO:0007669"/>
    <property type="project" value="UniProtKB-SubCell"/>
</dbReference>
<dbReference type="InterPro" id="IPR003807">
    <property type="entry name" value="DUF202"/>
</dbReference>
<dbReference type="Pfam" id="PF02656">
    <property type="entry name" value="DUF202"/>
    <property type="match status" value="1"/>
</dbReference>
<name>YIDG_SHIFL</name>
<comment type="subcellular location">
    <subcellularLocation>
        <location evidence="1">Cell inner membrane</location>
        <topology evidence="1">Multi-pass membrane protein</topology>
    </subcellularLocation>
</comment>
<protein>
    <recommendedName>
        <fullName>Inner membrane protein YidG</fullName>
    </recommendedName>
</protein>